<evidence type="ECO:0000255" key="1">
    <source>
        <dbReference type="HAMAP-Rule" id="MF_01346"/>
    </source>
</evidence>
<comment type="function">
    <text evidence="1">Produces ATP from ADP in the presence of a proton gradient across the membrane. The alpha chain is a regulatory subunit.</text>
</comment>
<comment type="catalytic activity">
    <reaction evidence="1">
        <text>ATP + H2O + 4 H(+)(in) = ADP + phosphate + 5 H(+)(out)</text>
        <dbReference type="Rhea" id="RHEA:57720"/>
        <dbReference type="ChEBI" id="CHEBI:15377"/>
        <dbReference type="ChEBI" id="CHEBI:15378"/>
        <dbReference type="ChEBI" id="CHEBI:30616"/>
        <dbReference type="ChEBI" id="CHEBI:43474"/>
        <dbReference type="ChEBI" id="CHEBI:456216"/>
        <dbReference type="EC" id="7.1.2.2"/>
    </reaction>
</comment>
<comment type="subunit">
    <text evidence="1">F-type ATPases have 2 components, CF(1) - the catalytic core - and CF(0) - the membrane proton channel. CF(1) has five subunits: alpha(3), beta(3), gamma(1), delta(1), epsilon(1). CF(0) has three main subunits: a(1), b(2) and c(9-12). The alpha and beta chains form an alternating ring which encloses part of the gamma chain. CF(1) is attached to CF(0) by a central stalk formed by the gamma and epsilon chains, while a peripheral stalk is formed by the delta and b chains.</text>
</comment>
<comment type="subcellular location">
    <subcellularLocation>
        <location evidence="1">Cell inner membrane</location>
        <topology evidence="1">Peripheral membrane protein</topology>
    </subcellularLocation>
</comment>
<comment type="similarity">
    <text evidence="1">Belongs to the ATPase alpha/beta chains family.</text>
</comment>
<dbReference type="EC" id="7.1.2.2" evidence="1"/>
<dbReference type="EMBL" id="CU928145">
    <property type="protein sequence ID" value="CAV00821.1"/>
    <property type="molecule type" value="Genomic_DNA"/>
</dbReference>
<dbReference type="RefSeq" id="WP_001176745.1">
    <property type="nucleotide sequence ID" value="NZ_CP028304.1"/>
</dbReference>
<dbReference type="SMR" id="B7L884"/>
<dbReference type="GeneID" id="93778233"/>
<dbReference type="KEGG" id="eck:EC55989_4209"/>
<dbReference type="HOGENOM" id="CLU_010091_2_1_6"/>
<dbReference type="Proteomes" id="UP000000746">
    <property type="component" value="Chromosome"/>
</dbReference>
<dbReference type="GO" id="GO:0005886">
    <property type="term" value="C:plasma membrane"/>
    <property type="evidence" value="ECO:0007669"/>
    <property type="project" value="UniProtKB-SubCell"/>
</dbReference>
<dbReference type="GO" id="GO:0045259">
    <property type="term" value="C:proton-transporting ATP synthase complex"/>
    <property type="evidence" value="ECO:0007669"/>
    <property type="project" value="UniProtKB-KW"/>
</dbReference>
<dbReference type="GO" id="GO:0043531">
    <property type="term" value="F:ADP binding"/>
    <property type="evidence" value="ECO:0007669"/>
    <property type="project" value="TreeGrafter"/>
</dbReference>
<dbReference type="GO" id="GO:0005524">
    <property type="term" value="F:ATP binding"/>
    <property type="evidence" value="ECO:0007669"/>
    <property type="project" value="UniProtKB-UniRule"/>
</dbReference>
<dbReference type="GO" id="GO:0046933">
    <property type="term" value="F:proton-transporting ATP synthase activity, rotational mechanism"/>
    <property type="evidence" value="ECO:0007669"/>
    <property type="project" value="UniProtKB-UniRule"/>
</dbReference>
<dbReference type="CDD" id="cd18113">
    <property type="entry name" value="ATP-synt_F1_alpha_C"/>
    <property type="match status" value="1"/>
</dbReference>
<dbReference type="CDD" id="cd18116">
    <property type="entry name" value="ATP-synt_F1_alpha_N"/>
    <property type="match status" value="1"/>
</dbReference>
<dbReference type="CDD" id="cd01132">
    <property type="entry name" value="F1-ATPase_alpha_CD"/>
    <property type="match status" value="1"/>
</dbReference>
<dbReference type="FunFam" id="1.20.150.20:FF:000001">
    <property type="entry name" value="ATP synthase subunit alpha"/>
    <property type="match status" value="1"/>
</dbReference>
<dbReference type="FunFam" id="2.40.30.20:FF:000001">
    <property type="entry name" value="ATP synthase subunit alpha"/>
    <property type="match status" value="1"/>
</dbReference>
<dbReference type="FunFam" id="3.40.50.300:FF:000002">
    <property type="entry name" value="ATP synthase subunit alpha"/>
    <property type="match status" value="1"/>
</dbReference>
<dbReference type="Gene3D" id="2.40.30.20">
    <property type="match status" value="1"/>
</dbReference>
<dbReference type="Gene3D" id="1.20.150.20">
    <property type="entry name" value="ATP synthase alpha/beta chain, C-terminal domain"/>
    <property type="match status" value="1"/>
</dbReference>
<dbReference type="Gene3D" id="3.40.50.300">
    <property type="entry name" value="P-loop containing nucleotide triphosphate hydrolases"/>
    <property type="match status" value="1"/>
</dbReference>
<dbReference type="HAMAP" id="MF_01346">
    <property type="entry name" value="ATP_synth_alpha_bact"/>
    <property type="match status" value="1"/>
</dbReference>
<dbReference type="InterPro" id="IPR023366">
    <property type="entry name" value="ATP_synth_asu-like_sf"/>
</dbReference>
<dbReference type="InterPro" id="IPR000793">
    <property type="entry name" value="ATP_synth_asu_C"/>
</dbReference>
<dbReference type="InterPro" id="IPR038376">
    <property type="entry name" value="ATP_synth_asu_C_sf"/>
</dbReference>
<dbReference type="InterPro" id="IPR033732">
    <property type="entry name" value="ATP_synth_F1_a_nt-bd_dom"/>
</dbReference>
<dbReference type="InterPro" id="IPR005294">
    <property type="entry name" value="ATP_synth_F1_asu"/>
</dbReference>
<dbReference type="InterPro" id="IPR020003">
    <property type="entry name" value="ATPase_a/bsu_AS"/>
</dbReference>
<dbReference type="InterPro" id="IPR004100">
    <property type="entry name" value="ATPase_F1/V1/A1_a/bsu_N"/>
</dbReference>
<dbReference type="InterPro" id="IPR036121">
    <property type="entry name" value="ATPase_F1/V1/A1_a/bsu_N_sf"/>
</dbReference>
<dbReference type="InterPro" id="IPR000194">
    <property type="entry name" value="ATPase_F1/V1/A1_a/bsu_nucl-bd"/>
</dbReference>
<dbReference type="InterPro" id="IPR027417">
    <property type="entry name" value="P-loop_NTPase"/>
</dbReference>
<dbReference type="NCBIfam" id="TIGR00962">
    <property type="entry name" value="atpA"/>
    <property type="match status" value="1"/>
</dbReference>
<dbReference type="NCBIfam" id="NF009884">
    <property type="entry name" value="PRK13343.1"/>
    <property type="match status" value="1"/>
</dbReference>
<dbReference type="PANTHER" id="PTHR48082">
    <property type="entry name" value="ATP SYNTHASE SUBUNIT ALPHA, MITOCHONDRIAL"/>
    <property type="match status" value="1"/>
</dbReference>
<dbReference type="PANTHER" id="PTHR48082:SF2">
    <property type="entry name" value="ATP SYNTHASE SUBUNIT ALPHA, MITOCHONDRIAL"/>
    <property type="match status" value="1"/>
</dbReference>
<dbReference type="Pfam" id="PF00006">
    <property type="entry name" value="ATP-synt_ab"/>
    <property type="match status" value="1"/>
</dbReference>
<dbReference type="Pfam" id="PF00306">
    <property type="entry name" value="ATP-synt_ab_C"/>
    <property type="match status" value="1"/>
</dbReference>
<dbReference type="Pfam" id="PF02874">
    <property type="entry name" value="ATP-synt_ab_N"/>
    <property type="match status" value="1"/>
</dbReference>
<dbReference type="SUPFAM" id="SSF47917">
    <property type="entry name" value="C-terminal domain of alpha and beta subunits of F1 ATP synthase"/>
    <property type="match status" value="1"/>
</dbReference>
<dbReference type="SUPFAM" id="SSF50615">
    <property type="entry name" value="N-terminal domain of alpha and beta subunits of F1 ATP synthase"/>
    <property type="match status" value="1"/>
</dbReference>
<dbReference type="SUPFAM" id="SSF52540">
    <property type="entry name" value="P-loop containing nucleoside triphosphate hydrolases"/>
    <property type="match status" value="1"/>
</dbReference>
<dbReference type="PROSITE" id="PS00152">
    <property type="entry name" value="ATPASE_ALPHA_BETA"/>
    <property type="match status" value="1"/>
</dbReference>
<proteinExistence type="inferred from homology"/>
<accession>B7L884</accession>
<reference key="1">
    <citation type="journal article" date="2009" name="PLoS Genet.">
        <title>Organised genome dynamics in the Escherichia coli species results in highly diverse adaptive paths.</title>
        <authorList>
            <person name="Touchon M."/>
            <person name="Hoede C."/>
            <person name="Tenaillon O."/>
            <person name="Barbe V."/>
            <person name="Baeriswyl S."/>
            <person name="Bidet P."/>
            <person name="Bingen E."/>
            <person name="Bonacorsi S."/>
            <person name="Bouchier C."/>
            <person name="Bouvet O."/>
            <person name="Calteau A."/>
            <person name="Chiapello H."/>
            <person name="Clermont O."/>
            <person name="Cruveiller S."/>
            <person name="Danchin A."/>
            <person name="Diard M."/>
            <person name="Dossat C."/>
            <person name="Karoui M.E."/>
            <person name="Frapy E."/>
            <person name="Garry L."/>
            <person name="Ghigo J.M."/>
            <person name="Gilles A.M."/>
            <person name="Johnson J."/>
            <person name="Le Bouguenec C."/>
            <person name="Lescat M."/>
            <person name="Mangenot S."/>
            <person name="Martinez-Jehanne V."/>
            <person name="Matic I."/>
            <person name="Nassif X."/>
            <person name="Oztas S."/>
            <person name="Petit M.A."/>
            <person name="Pichon C."/>
            <person name="Rouy Z."/>
            <person name="Ruf C.S."/>
            <person name="Schneider D."/>
            <person name="Tourret J."/>
            <person name="Vacherie B."/>
            <person name="Vallenet D."/>
            <person name="Medigue C."/>
            <person name="Rocha E.P.C."/>
            <person name="Denamur E."/>
        </authorList>
    </citation>
    <scope>NUCLEOTIDE SEQUENCE [LARGE SCALE GENOMIC DNA]</scope>
    <source>
        <strain>55989 / EAEC</strain>
    </source>
</reference>
<protein>
    <recommendedName>
        <fullName evidence="1">ATP synthase subunit alpha</fullName>
        <ecNumber evidence="1">7.1.2.2</ecNumber>
    </recommendedName>
    <alternativeName>
        <fullName evidence="1">ATP synthase F1 sector subunit alpha</fullName>
    </alternativeName>
    <alternativeName>
        <fullName evidence="1">F-ATPase subunit alpha</fullName>
    </alternativeName>
</protein>
<name>ATPA_ECO55</name>
<feature type="chain" id="PRO_1000166538" description="ATP synthase subunit alpha">
    <location>
        <begin position="1"/>
        <end position="513"/>
    </location>
</feature>
<feature type="binding site" evidence="1">
    <location>
        <begin position="169"/>
        <end position="176"/>
    </location>
    <ligand>
        <name>ATP</name>
        <dbReference type="ChEBI" id="CHEBI:30616"/>
    </ligand>
</feature>
<feature type="site" description="Required for activity" evidence="1">
    <location>
        <position position="373"/>
    </location>
</feature>
<sequence length="513" mass="55222">MQLNSTEISELIKQRIAQFNVVSEAHNEGTIVSVSDGVIRIHGLADCMQGEMISLPGNRYAIALNLERDSVGAVVMGPYADLAEGMKVKCTGRILEVPVGRGLLGRVVNTLGAPIDGKGPLDHDGFSAVEAIAPGVIERQSVDQPVQTGYKAVDSMIPIGRGQRELIIGDRQTGKTALAIDAIINQRDSGIKCIYVAIGQKASTISNVVRKLEEHGALANTIVVVATASESAALQYLAPYAGCAMGEYFRDRGEDALIIYDDLSKQAVAYRQISLLLRRPPGREAFPGDVFYLHSRLLERAARVNAEYVEAFTKGEVKGKTGSLTALPIIETQAGDVSAFVPTNVISITDGQIFLETNLFNAGIRPAVNPGISVSRVGGAAQTKIMKKLSGGIRTALAQYRELAAFSQFASDLDDATRKQLDHGQKVTELLKQKQYAPMSVAQQSLVLFAAERGYLADVELSKIGSFEAALLAYVDRDHAPLMQEINQTGGYNDEIEGKLKGILDSFKATQSW</sequence>
<organism>
    <name type="scientific">Escherichia coli (strain 55989 / EAEC)</name>
    <dbReference type="NCBI Taxonomy" id="585055"/>
    <lineage>
        <taxon>Bacteria</taxon>
        <taxon>Pseudomonadati</taxon>
        <taxon>Pseudomonadota</taxon>
        <taxon>Gammaproteobacteria</taxon>
        <taxon>Enterobacterales</taxon>
        <taxon>Enterobacteriaceae</taxon>
        <taxon>Escherichia</taxon>
    </lineage>
</organism>
<gene>
    <name evidence="1" type="primary">atpA</name>
    <name type="ordered locus">EC55989_4209</name>
</gene>
<keyword id="KW-0066">ATP synthesis</keyword>
<keyword id="KW-0067">ATP-binding</keyword>
<keyword id="KW-0997">Cell inner membrane</keyword>
<keyword id="KW-1003">Cell membrane</keyword>
<keyword id="KW-0139">CF(1)</keyword>
<keyword id="KW-0375">Hydrogen ion transport</keyword>
<keyword id="KW-0406">Ion transport</keyword>
<keyword id="KW-0472">Membrane</keyword>
<keyword id="KW-0547">Nucleotide-binding</keyword>
<keyword id="KW-1185">Reference proteome</keyword>
<keyword id="KW-1278">Translocase</keyword>
<keyword id="KW-0813">Transport</keyword>